<gene>
    <name evidence="1" type="primary">obg</name>
    <name type="ordered locus">SA1470</name>
</gene>
<protein>
    <recommendedName>
        <fullName evidence="1">GTPase Obg</fullName>
        <ecNumber evidence="1">3.6.5.-</ecNumber>
    </recommendedName>
    <alternativeName>
        <fullName evidence="1">GTP-binding protein Obg</fullName>
    </alternativeName>
</protein>
<reference key="1">
    <citation type="journal article" date="2001" name="Lancet">
        <title>Whole genome sequencing of meticillin-resistant Staphylococcus aureus.</title>
        <authorList>
            <person name="Kuroda M."/>
            <person name="Ohta T."/>
            <person name="Uchiyama I."/>
            <person name="Baba T."/>
            <person name="Yuzawa H."/>
            <person name="Kobayashi I."/>
            <person name="Cui L."/>
            <person name="Oguchi A."/>
            <person name="Aoki K."/>
            <person name="Nagai Y."/>
            <person name="Lian J.-Q."/>
            <person name="Ito T."/>
            <person name="Kanamori M."/>
            <person name="Matsumaru H."/>
            <person name="Maruyama A."/>
            <person name="Murakami H."/>
            <person name="Hosoyama A."/>
            <person name="Mizutani-Ui Y."/>
            <person name="Takahashi N.K."/>
            <person name="Sawano T."/>
            <person name="Inoue R."/>
            <person name="Kaito C."/>
            <person name="Sekimizu K."/>
            <person name="Hirakawa H."/>
            <person name="Kuhara S."/>
            <person name="Goto S."/>
            <person name="Yabuzaki J."/>
            <person name="Kanehisa M."/>
            <person name="Yamashita A."/>
            <person name="Oshima K."/>
            <person name="Furuya K."/>
            <person name="Yoshino C."/>
            <person name="Shiba T."/>
            <person name="Hattori M."/>
            <person name="Ogasawara N."/>
            <person name="Hayashi H."/>
            <person name="Hiramatsu K."/>
        </authorList>
    </citation>
    <scope>NUCLEOTIDE SEQUENCE [LARGE SCALE GENOMIC DNA]</scope>
    <source>
        <strain>N315</strain>
    </source>
</reference>
<reference key="2">
    <citation type="submission" date="2007-10" db="UniProtKB">
        <title>Shotgun proteomic analysis of total and membrane protein extracts of S. aureus strain N315.</title>
        <authorList>
            <person name="Vaezzadeh A.R."/>
            <person name="Deshusses J."/>
            <person name="Lescuyer P."/>
            <person name="Hochstrasser D.F."/>
        </authorList>
    </citation>
    <scope>IDENTIFICATION BY MASS SPECTROMETRY [LARGE SCALE ANALYSIS]</scope>
    <source>
        <strain>N315</strain>
    </source>
</reference>
<accession>Q7A584</accession>
<feature type="chain" id="PRO_0000386277" description="GTPase Obg">
    <location>
        <begin position="1"/>
        <end position="430"/>
    </location>
</feature>
<feature type="domain" description="Obg" evidence="3">
    <location>
        <begin position="1"/>
        <end position="158"/>
    </location>
</feature>
<feature type="domain" description="OBG-type G" evidence="1">
    <location>
        <begin position="159"/>
        <end position="329"/>
    </location>
</feature>
<feature type="domain" description="OCT" evidence="2">
    <location>
        <begin position="352"/>
        <end position="430"/>
    </location>
</feature>
<feature type="region of interest" description="Disordered" evidence="4">
    <location>
        <begin position="118"/>
        <end position="145"/>
    </location>
</feature>
<feature type="binding site" evidence="1">
    <location>
        <begin position="165"/>
        <end position="172"/>
    </location>
    <ligand>
        <name>GTP</name>
        <dbReference type="ChEBI" id="CHEBI:37565"/>
    </ligand>
</feature>
<feature type="binding site" evidence="1">
    <location>
        <position position="172"/>
    </location>
    <ligand>
        <name>Mg(2+)</name>
        <dbReference type="ChEBI" id="CHEBI:18420"/>
    </ligand>
</feature>
<feature type="binding site" evidence="1">
    <location>
        <begin position="190"/>
        <end position="194"/>
    </location>
    <ligand>
        <name>GTP</name>
        <dbReference type="ChEBI" id="CHEBI:37565"/>
    </ligand>
</feature>
<feature type="binding site" evidence="1">
    <location>
        <position position="192"/>
    </location>
    <ligand>
        <name>Mg(2+)</name>
        <dbReference type="ChEBI" id="CHEBI:18420"/>
    </ligand>
</feature>
<feature type="binding site" evidence="1">
    <location>
        <begin position="212"/>
        <end position="215"/>
    </location>
    <ligand>
        <name>GTP</name>
        <dbReference type="ChEBI" id="CHEBI:37565"/>
    </ligand>
</feature>
<feature type="binding site" evidence="1">
    <location>
        <begin position="282"/>
        <end position="285"/>
    </location>
    <ligand>
        <name>GTP</name>
        <dbReference type="ChEBI" id="CHEBI:37565"/>
    </ligand>
</feature>
<feature type="binding site" evidence="1">
    <location>
        <begin position="310"/>
        <end position="312"/>
    </location>
    <ligand>
        <name>GTP</name>
        <dbReference type="ChEBI" id="CHEBI:37565"/>
    </ligand>
</feature>
<evidence type="ECO:0000255" key="1">
    <source>
        <dbReference type="HAMAP-Rule" id="MF_01454"/>
    </source>
</evidence>
<evidence type="ECO:0000255" key="2">
    <source>
        <dbReference type="PROSITE-ProRule" id="PRU01229"/>
    </source>
</evidence>
<evidence type="ECO:0000255" key="3">
    <source>
        <dbReference type="PROSITE-ProRule" id="PRU01231"/>
    </source>
</evidence>
<evidence type="ECO:0000256" key="4">
    <source>
        <dbReference type="SAM" id="MobiDB-lite"/>
    </source>
</evidence>
<keyword id="KW-0963">Cytoplasm</keyword>
<keyword id="KW-0342">GTP-binding</keyword>
<keyword id="KW-0378">Hydrolase</keyword>
<keyword id="KW-0460">Magnesium</keyword>
<keyword id="KW-0479">Metal-binding</keyword>
<keyword id="KW-0547">Nucleotide-binding</keyword>
<comment type="function">
    <text evidence="1">An essential GTPase which binds GTP, GDP and possibly (p)ppGpp with moderate affinity, with high nucleotide exchange rates and a fairly low GTP hydrolysis rate. Plays a role in control of the cell cycle, stress response, ribosome biogenesis and in those bacteria that undergo differentiation, in morphogenesis control.</text>
</comment>
<comment type="cofactor">
    <cofactor evidence="1">
        <name>Mg(2+)</name>
        <dbReference type="ChEBI" id="CHEBI:18420"/>
    </cofactor>
</comment>
<comment type="subunit">
    <text evidence="1">Monomer.</text>
</comment>
<comment type="subcellular location">
    <subcellularLocation>
        <location evidence="1">Cytoplasm</location>
    </subcellularLocation>
</comment>
<comment type="similarity">
    <text evidence="1">Belongs to the TRAFAC class OBG-HflX-like GTPase superfamily. OBG GTPase family.</text>
</comment>
<proteinExistence type="evidence at protein level"/>
<dbReference type="EC" id="3.6.5.-" evidence="1"/>
<dbReference type="EMBL" id="BA000018">
    <property type="protein sequence ID" value="BAB42736.1"/>
    <property type="molecule type" value="Genomic_DNA"/>
</dbReference>
<dbReference type="PIR" id="C89947">
    <property type="entry name" value="C89947"/>
</dbReference>
<dbReference type="SMR" id="Q7A584"/>
<dbReference type="EnsemblBacteria" id="BAB42736">
    <property type="protein sequence ID" value="BAB42736"/>
    <property type="gene ID" value="BAB42736"/>
</dbReference>
<dbReference type="KEGG" id="sau:SA1470"/>
<dbReference type="HOGENOM" id="CLU_011747_2_1_9"/>
<dbReference type="GO" id="GO:0005737">
    <property type="term" value="C:cytoplasm"/>
    <property type="evidence" value="ECO:0007669"/>
    <property type="project" value="UniProtKB-SubCell"/>
</dbReference>
<dbReference type="GO" id="GO:0005525">
    <property type="term" value="F:GTP binding"/>
    <property type="evidence" value="ECO:0007669"/>
    <property type="project" value="UniProtKB-UniRule"/>
</dbReference>
<dbReference type="GO" id="GO:0003924">
    <property type="term" value="F:GTPase activity"/>
    <property type="evidence" value="ECO:0007669"/>
    <property type="project" value="UniProtKB-UniRule"/>
</dbReference>
<dbReference type="GO" id="GO:0000287">
    <property type="term" value="F:magnesium ion binding"/>
    <property type="evidence" value="ECO:0007669"/>
    <property type="project" value="InterPro"/>
</dbReference>
<dbReference type="GO" id="GO:0042254">
    <property type="term" value="P:ribosome biogenesis"/>
    <property type="evidence" value="ECO:0007669"/>
    <property type="project" value="UniProtKB-UniRule"/>
</dbReference>
<dbReference type="CDD" id="cd01898">
    <property type="entry name" value="Obg"/>
    <property type="match status" value="1"/>
</dbReference>
<dbReference type="FunFam" id="2.70.210.12:FF:000001">
    <property type="entry name" value="GTPase Obg"/>
    <property type="match status" value="1"/>
</dbReference>
<dbReference type="FunFam" id="3.40.50.300:FF:000515">
    <property type="entry name" value="GTPase Obg"/>
    <property type="match status" value="1"/>
</dbReference>
<dbReference type="Gene3D" id="3.30.300.350">
    <property type="entry name" value="GTP-binding protein OBG, C-terminal domain"/>
    <property type="match status" value="1"/>
</dbReference>
<dbReference type="Gene3D" id="2.70.210.12">
    <property type="entry name" value="GTP1/OBG domain"/>
    <property type="match status" value="1"/>
</dbReference>
<dbReference type="Gene3D" id="3.40.50.300">
    <property type="entry name" value="P-loop containing nucleotide triphosphate hydrolases"/>
    <property type="match status" value="1"/>
</dbReference>
<dbReference type="HAMAP" id="MF_01454">
    <property type="entry name" value="GTPase_Obg"/>
    <property type="match status" value="1"/>
</dbReference>
<dbReference type="InterPro" id="IPR031167">
    <property type="entry name" value="G_OBG"/>
</dbReference>
<dbReference type="InterPro" id="IPR006073">
    <property type="entry name" value="GTP-bd"/>
</dbReference>
<dbReference type="InterPro" id="IPR014100">
    <property type="entry name" value="GTP-bd_Obg/CgtA"/>
</dbReference>
<dbReference type="InterPro" id="IPR036346">
    <property type="entry name" value="GTP-bd_prot_GTP1/OBG_C_sf"/>
</dbReference>
<dbReference type="InterPro" id="IPR006074">
    <property type="entry name" value="GTP1-OBG_CS"/>
</dbReference>
<dbReference type="InterPro" id="IPR006169">
    <property type="entry name" value="GTP1_OBG_dom"/>
</dbReference>
<dbReference type="InterPro" id="IPR036726">
    <property type="entry name" value="GTP1_OBG_dom_sf"/>
</dbReference>
<dbReference type="InterPro" id="IPR045086">
    <property type="entry name" value="OBG_GTPase"/>
</dbReference>
<dbReference type="InterPro" id="IPR015349">
    <property type="entry name" value="OCT_dom"/>
</dbReference>
<dbReference type="InterPro" id="IPR027417">
    <property type="entry name" value="P-loop_NTPase"/>
</dbReference>
<dbReference type="NCBIfam" id="TIGR02729">
    <property type="entry name" value="Obg_CgtA"/>
    <property type="match status" value="1"/>
</dbReference>
<dbReference type="NCBIfam" id="TIGR03595">
    <property type="entry name" value="Obg_CgtA_exten"/>
    <property type="match status" value="1"/>
</dbReference>
<dbReference type="NCBIfam" id="NF008954">
    <property type="entry name" value="PRK12296.1"/>
    <property type="match status" value="1"/>
</dbReference>
<dbReference type="NCBIfam" id="NF008955">
    <property type="entry name" value="PRK12297.1"/>
    <property type="match status" value="1"/>
</dbReference>
<dbReference type="NCBIfam" id="NF008956">
    <property type="entry name" value="PRK12299.1"/>
    <property type="match status" value="1"/>
</dbReference>
<dbReference type="PANTHER" id="PTHR11702">
    <property type="entry name" value="DEVELOPMENTALLY REGULATED GTP-BINDING PROTEIN-RELATED"/>
    <property type="match status" value="1"/>
</dbReference>
<dbReference type="PANTHER" id="PTHR11702:SF31">
    <property type="entry name" value="MITOCHONDRIAL RIBOSOME-ASSOCIATED GTPASE 2"/>
    <property type="match status" value="1"/>
</dbReference>
<dbReference type="Pfam" id="PF09269">
    <property type="entry name" value="DUF1967"/>
    <property type="match status" value="1"/>
</dbReference>
<dbReference type="Pfam" id="PF01018">
    <property type="entry name" value="GTP1_OBG"/>
    <property type="match status" value="1"/>
</dbReference>
<dbReference type="Pfam" id="PF01926">
    <property type="entry name" value="MMR_HSR1"/>
    <property type="match status" value="1"/>
</dbReference>
<dbReference type="PIRSF" id="PIRSF002401">
    <property type="entry name" value="GTP_bd_Obg/CgtA"/>
    <property type="match status" value="1"/>
</dbReference>
<dbReference type="PRINTS" id="PR00326">
    <property type="entry name" value="GTP1OBG"/>
</dbReference>
<dbReference type="SUPFAM" id="SSF102741">
    <property type="entry name" value="Obg GTP-binding protein C-terminal domain"/>
    <property type="match status" value="1"/>
</dbReference>
<dbReference type="SUPFAM" id="SSF82051">
    <property type="entry name" value="Obg GTP-binding protein N-terminal domain"/>
    <property type="match status" value="1"/>
</dbReference>
<dbReference type="SUPFAM" id="SSF52540">
    <property type="entry name" value="P-loop containing nucleoside triphosphate hydrolases"/>
    <property type="match status" value="1"/>
</dbReference>
<dbReference type="PROSITE" id="PS51710">
    <property type="entry name" value="G_OBG"/>
    <property type="match status" value="1"/>
</dbReference>
<dbReference type="PROSITE" id="PS00905">
    <property type="entry name" value="GTP1_OBG"/>
    <property type="match status" value="1"/>
</dbReference>
<dbReference type="PROSITE" id="PS51883">
    <property type="entry name" value="OBG"/>
    <property type="match status" value="1"/>
</dbReference>
<dbReference type="PROSITE" id="PS51881">
    <property type="entry name" value="OCT"/>
    <property type="match status" value="1"/>
</dbReference>
<sequence length="430" mass="47235">MFVDQVKISLKAGDGGNGITAYRREKYVPFGGPAGGDGGKGASVVFEVDEGLRTLLDFRYQRHFKASKGENGQSSNMHGKNAEDLVLKVPPGTIIKNVETDEVLADLVEDGQRAVVAKGGRGGRGNSRFATPRNPAPDFSEKGEPGEELDVSLELKLLADVGLVGFPSVGKSTLLSIVSKAKPKIGAYHFTTIKPNLGVVSTPDQRSFVMADLPGLIEGASDGVGLGHQFLRHVERTKVIVHMIDMSGSEGREPIEDYKVINQELAAYEQRLEDRPQIVVANKMDLPESQDNLNLFKEEIGEDVPVIPVSTITRDNIDQLLYAIADKLEEYKDVDFTVEEEESVGINRVLYKHTPSQDKFTISRDDDGAYVVSGNAIERMFKMTDFNSDPAVRRFARQMRSMGIDDALRERGCKNGDIVRILGGEFEFVE</sequence>
<name>OBG_STAAN</name>
<organism>
    <name type="scientific">Staphylococcus aureus (strain N315)</name>
    <dbReference type="NCBI Taxonomy" id="158879"/>
    <lineage>
        <taxon>Bacteria</taxon>
        <taxon>Bacillati</taxon>
        <taxon>Bacillota</taxon>
        <taxon>Bacilli</taxon>
        <taxon>Bacillales</taxon>
        <taxon>Staphylococcaceae</taxon>
        <taxon>Staphylococcus</taxon>
    </lineage>
</organism>